<feature type="chain" id="PRO_0000048195" description="Tubulin alpha-1/2/3 chain">
    <location>
        <begin position="1"/>
        <end position="453"/>
    </location>
</feature>
<feature type="region of interest" description="Disordered" evidence="3">
    <location>
        <begin position="429"/>
        <end position="453"/>
    </location>
</feature>
<feature type="compositionally biased region" description="Acidic residues" evidence="3">
    <location>
        <begin position="431"/>
        <end position="453"/>
    </location>
</feature>
<feature type="active site" evidence="2">
    <location>
        <position position="254"/>
    </location>
</feature>
<feature type="binding site" evidence="2">
    <location>
        <position position="11"/>
    </location>
    <ligand>
        <name>GTP</name>
        <dbReference type="ChEBI" id="CHEBI:37565"/>
    </ligand>
</feature>
<feature type="binding site" evidence="2">
    <location>
        <position position="71"/>
    </location>
    <ligand>
        <name>GTP</name>
        <dbReference type="ChEBI" id="CHEBI:37565"/>
    </ligand>
</feature>
<feature type="binding site" evidence="2">
    <location>
        <position position="71"/>
    </location>
    <ligand>
        <name>Mg(2+)</name>
        <dbReference type="ChEBI" id="CHEBI:18420"/>
    </ligand>
</feature>
<feature type="binding site" evidence="2">
    <location>
        <position position="140"/>
    </location>
    <ligand>
        <name>GTP</name>
        <dbReference type="ChEBI" id="CHEBI:37565"/>
    </ligand>
</feature>
<feature type="binding site" evidence="2">
    <location>
        <position position="144"/>
    </location>
    <ligand>
        <name>GTP</name>
        <dbReference type="ChEBI" id="CHEBI:37565"/>
    </ligand>
</feature>
<feature type="binding site" evidence="2">
    <location>
        <position position="145"/>
    </location>
    <ligand>
        <name>GTP</name>
        <dbReference type="ChEBI" id="CHEBI:37565"/>
    </ligand>
</feature>
<feature type="binding site" evidence="2">
    <location>
        <position position="179"/>
    </location>
    <ligand>
        <name>GTP</name>
        <dbReference type="ChEBI" id="CHEBI:37565"/>
    </ligand>
</feature>
<feature type="binding site" evidence="2">
    <location>
        <position position="206"/>
    </location>
    <ligand>
        <name>GTP</name>
        <dbReference type="ChEBI" id="CHEBI:37565"/>
    </ligand>
</feature>
<feature type="binding site" evidence="2">
    <location>
        <position position="228"/>
    </location>
    <ligand>
        <name>GTP</name>
        <dbReference type="ChEBI" id="CHEBI:37565"/>
    </ligand>
</feature>
<feature type="modified residue" description="N6-acetyllysine" evidence="1">
    <location>
        <position position="40"/>
    </location>
</feature>
<dbReference type="EC" id="3.6.5.-" evidence="2"/>
<dbReference type="EMBL" id="X12561">
    <property type="protein sequence ID" value="CAA31074.1"/>
    <property type="molecule type" value="mRNA"/>
</dbReference>
<dbReference type="EMBL" id="X12562">
    <property type="protein sequence ID" value="CAA31075.1"/>
    <property type="molecule type" value="mRNA"/>
</dbReference>
<dbReference type="EMBL" id="X12563">
    <property type="protein sequence ID" value="CAA31076.1"/>
    <property type="molecule type" value="Genomic_DNA"/>
</dbReference>
<dbReference type="PIR" id="A28914">
    <property type="entry name" value="A28914"/>
</dbReference>
<dbReference type="RefSeq" id="XP_002675196.1">
    <property type="nucleotide sequence ID" value="XM_002675150.1"/>
</dbReference>
<dbReference type="RefSeq" id="XP_002677003.1">
    <property type="nucleotide sequence ID" value="XM_002676957.1"/>
</dbReference>
<dbReference type="RefSeq" id="XP_002680089.1">
    <property type="nucleotide sequence ID" value="XM_002680043.1"/>
</dbReference>
<dbReference type="SMR" id="P11237"/>
<dbReference type="KEGG" id="ngr:NAEGRDRAFT_39221"/>
<dbReference type="KEGG" id="ngr:NAEGRDRAFT_56065"/>
<dbReference type="KEGG" id="ngr:NAEGRDRAFT_56236"/>
<dbReference type="VEuPathDB" id="AmoebaDB:NAEGRDRAFT_39221"/>
<dbReference type="eggNOG" id="KOG1376">
    <property type="taxonomic scope" value="Eukaryota"/>
</dbReference>
<dbReference type="OMA" id="YMASCIL"/>
<dbReference type="OrthoDB" id="1853138at2759"/>
<dbReference type="GO" id="GO:0005737">
    <property type="term" value="C:cytoplasm"/>
    <property type="evidence" value="ECO:0007669"/>
    <property type="project" value="UniProtKB-KW"/>
</dbReference>
<dbReference type="GO" id="GO:0005874">
    <property type="term" value="C:microtubule"/>
    <property type="evidence" value="ECO:0007669"/>
    <property type="project" value="UniProtKB-KW"/>
</dbReference>
<dbReference type="GO" id="GO:0005525">
    <property type="term" value="F:GTP binding"/>
    <property type="evidence" value="ECO:0007669"/>
    <property type="project" value="UniProtKB-KW"/>
</dbReference>
<dbReference type="GO" id="GO:0016787">
    <property type="term" value="F:hydrolase activity"/>
    <property type="evidence" value="ECO:0007669"/>
    <property type="project" value="UniProtKB-KW"/>
</dbReference>
<dbReference type="GO" id="GO:0046872">
    <property type="term" value="F:metal ion binding"/>
    <property type="evidence" value="ECO:0007669"/>
    <property type="project" value="UniProtKB-KW"/>
</dbReference>
<dbReference type="GO" id="GO:0005200">
    <property type="term" value="F:structural constituent of cytoskeleton"/>
    <property type="evidence" value="ECO:0007669"/>
    <property type="project" value="InterPro"/>
</dbReference>
<dbReference type="GO" id="GO:0007017">
    <property type="term" value="P:microtubule-based process"/>
    <property type="evidence" value="ECO:0007669"/>
    <property type="project" value="InterPro"/>
</dbReference>
<dbReference type="CDD" id="cd02186">
    <property type="entry name" value="alpha_tubulin"/>
    <property type="match status" value="1"/>
</dbReference>
<dbReference type="FunFam" id="1.10.287.600:FF:000005">
    <property type="entry name" value="Tubulin alpha chain"/>
    <property type="match status" value="1"/>
</dbReference>
<dbReference type="FunFam" id="3.30.1330.20:FF:000001">
    <property type="entry name" value="Tubulin alpha chain"/>
    <property type="match status" value="1"/>
</dbReference>
<dbReference type="FunFam" id="3.40.50.1440:FF:000004">
    <property type="entry name" value="Tubulin alpha chain"/>
    <property type="match status" value="1"/>
</dbReference>
<dbReference type="Gene3D" id="1.10.287.600">
    <property type="entry name" value="Helix hairpin bin"/>
    <property type="match status" value="1"/>
</dbReference>
<dbReference type="Gene3D" id="3.30.1330.20">
    <property type="entry name" value="Tubulin/FtsZ, C-terminal domain"/>
    <property type="match status" value="1"/>
</dbReference>
<dbReference type="Gene3D" id="3.40.50.1440">
    <property type="entry name" value="Tubulin/FtsZ, GTPase domain"/>
    <property type="match status" value="1"/>
</dbReference>
<dbReference type="InterPro" id="IPR002452">
    <property type="entry name" value="Alpha_tubulin"/>
</dbReference>
<dbReference type="InterPro" id="IPR008280">
    <property type="entry name" value="Tub_FtsZ_C"/>
</dbReference>
<dbReference type="InterPro" id="IPR000217">
    <property type="entry name" value="Tubulin"/>
</dbReference>
<dbReference type="InterPro" id="IPR037103">
    <property type="entry name" value="Tubulin/FtsZ-like_C"/>
</dbReference>
<dbReference type="InterPro" id="IPR018316">
    <property type="entry name" value="Tubulin/FtsZ_2-layer-sand-dom"/>
</dbReference>
<dbReference type="InterPro" id="IPR036525">
    <property type="entry name" value="Tubulin/FtsZ_GTPase_sf"/>
</dbReference>
<dbReference type="InterPro" id="IPR023123">
    <property type="entry name" value="Tubulin_C"/>
</dbReference>
<dbReference type="InterPro" id="IPR017975">
    <property type="entry name" value="Tubulin_CS"/>
</dbReference>
<dbReference type="InterPro" id="IPR003008">
    <property type="entry name" value="Tubulin_FtsZ_GTPase"/>
</dbReference>
<dbReference type="PANTHER" id="PTHR11588">
    <property type="entry name" value="TUBULIN"/>
    <property type="match status" value="1"/>
</dbReference>
<dbReference type="Pfam" id="PF00091">
    <property type="entry name" value="Tubulin"/>
    <property type="match status" value="1"/>
</dbReference>
<dbReference type="Pfam" id="PF03953">
    <property type="entry name" value="Tubulin_C"/>
    <property type="match status" value="1"/>
</dbReference>
<dbReference type="PRINTS" id="PR01162">
    <property type="entry name" value="ALPHATUBULIN"/>
</dbReference>
<dbReference type="PRINTS" id="PR01161">
    <property type="entry name" value="TUBULIN"/>
</dbReference>
<dbReference type="SMART" id="SM00864">
    <property type="entry name" value="Tubulin"/>
    <property type="match status" value="1"/>
</dbReference>
<dbReference type="SMART" id="SM00865">
    <property type="entry name" value="Tubulin_C"/>
    <property type="match status" value="1"/>
</dbReference>
<dbReference type="SUPFAM" id="SSF55307">
    <property type="entry name" value="Tubulin C-terminal domain-like"/>
    <property type="match status" value="1"/>
</dbReference>
<dbReference type="SUPFAM" id="SSF52490">
    <property type="entry name" value="Tubulin nucleotide-binding domain-like"/>
    <property type="match status" value="1"/>
</dbReference>
<dbReference type="PROSITE" id="PS00227">
    <property type="entry name" value="TUBULIN"/>
    <property type="match status" value="1"/>
</dbReference>
<reference key="1">
    <citation type="journal article" date="1988" name="J. Cell Biol.">
        <title>The alpha-tubulin gene family expressed during cell differentiation in Naegleria gruberi.</title>
        <authorList>
            <person name="Lai E.Y."/>
            <person name="Remillard S.P."/>
            <person name="Fulton C."/>
        </authorList>
    </citation>
    <scope>NUCLEOTIDE SEQUENCE [GENOMIC DNA / MRNA]</scope>
    <source>
        <strain>ATCC 30223 / NEG</strain>
    </source>
</reference>
<evidence type="ECO:0000250" key="1"/>
<evidence type="ECO:0000250" key="2">
    <source>
        <dbReference type="UniProtKB" id="P68363"/>
    </source>
</evidence>
<evidence type="ECO:0000256" key="3">
    <source>
        <dbReference type="SAM" id="MobiDB-lite"/>
    </source>
</evidence>
<evidence type="ECO:0000305" key="4"/>
<accession>P11237</accession>
<sequence>MREVISIHIGQAGVQVGNACWELYCLEHGIQPDGLMPSDKTIGVEDDAFNTFFSETGAGKHVPRAVFLDLEPTVVDEVRTGTYRQLFHPEQLITGKEDAANNYARGHYTIGKEIVDLCLDRIRKLADNCTGLQGFLVFSSVGGGTGSGLGALLLERLSVDYGKKSKLGFTVYPSPQVATAVVEPYNSVLSTHALLEHTDVAVMLDNEAIYDICRRSLDIQRPTYTNLNRLIAQVISSLTASLRFDGALNVDVTEFQTNLVPYPRIHFMLCSYAPVISAEKAYHEQLSVAEITNSAFEPASMMAKCDPRHGKYMACCLMYRGDVVPKDVNAAVATIKTKRTIQFVDWSPTGFKCGINYQPPTVVPGGDLAKVQRAVCMISNSTAIAEVFSRIDHKFDLMYAKRAFVHWYVGEGMEEGEFSEAREDLAALEKDYEEVGTESQEGDGEEGEDGGDQ</sequence>
<name>TBA1_NAEGR</name>
<gene>
    <name type="primary">TBA1</name>
</gene>
<gene>
    <name type="primary">TBA2</name>
</gene>
<gene>
    <name type="primary">TBA3</name>
</gene>
<organism>
    <name type="scientific">Naegleria gruberi</name>
    <name type="common">Amoeba</name>
    <dbReference type="NCBI Taxonomy" id="5762"/>
    <lineage>
        <taxon>Eukaryota</taxon>
        <taxon>Discoba</taxon>
        <taxon>Heterolobosea</taxon>
        <taxon>Tetramitia</taxon>
        <taxon>Eutetramitia</taxon>
        <taxon>Vahlkampfiidae</taxon>
        <taxon>Naegleria</taxon>
    </lineage>
</organism>
<keyword id="KW-0007">Acetylation</keyword>
<keyword id="KW-0963">Cytoplasm</keyword>
<keyword id="KW-0206">Cytoskeleton</keyword>
<keyword id="KW-0342">GTP-binding</keyword>
<keyword id="KW-0378">Hydrolase</keyword>
<keyword id="KW-0460">Magnesium</keyword>
<keyword id="KW-0479">Metal-binding</keyword>
<keyword id="KW-0493">Microtubule</keyword>
<keyword id="KW-0547">Nucleotide-binding</keyword>
<protein>
    <recommendedName>
        <fullName>Tubulin alpha-1/2/3 chain</fullName>
        <ecNumber evidence="2">3.6.5.-</ecNumber>
    </recommendedName>
</protein>
<comment type="function">
    <text>Tubulin is the major constituent of microtubules, a cylinder consisting of laterally associated linear protofilaments composed of alpha- and beta-tubulin heterodimers. Microtubules grow by the addition of GTP-tubulin dimers to the microtubule end, where a stabilizing cap forms. Below the cap, tubulin dimers are in GDP-bound state, owing to GTPase activity of alpha-tubulin.</text>
</comment>
<comment type="catalytic activity">
    <reaction evidence="2">
        <text>GTP + H2O = GDP + phosphate + H(+)</text>
        <dbReference type="Rhea" id="RHEA:19669"/>
        <dbReference type="ChEBI" id="CHEBI:15377"/>
        <dbReference type="ChEBI" id="CHEBI:15378"/>
        <dbReference type="ChEBI" id="CHEBI:37565"/>
        <dbReference type="ChEBI" id="CHEBI:43474"/>
        <dbReference type="ChEBI" id="CHEBI:58189"/>
    </reaction>
    <physiologicalReaction direction="left-to-right" evidence="2">
        <dbReference type="Rhea" id="RHEA:19670"/>
    </physiologicalReaction>
</comment>
<comment type="cofactor">
    <cofactor evidence="2">
        <name>Mg(2+)</name>
        <dbReference type="ChEBI" id="CHEBI:18420"/>
    </cofactor>
</comment>
<comment type="subunit">
    <text>Dimer of alpha and beta chains. A typical microtubule is a hollow water-filled tube with an outer diameter of 25 nm and an inner diameter of 15 nM. Alpha-beta heterodimers associate head-to-tail to form protofilaments running lengthwise along the microtubule wall with the beta-tubulin subunit facing the microtubule plus end conferring a structural polarity. Microtubules usually have 13 protofilaments but different protofilament numbers can be found in some organisms and specialized cells.</text>
</comment>
<comment type="subcellular location">
    <subcellularLocation>
        <location>Cytoplasm</location>
        <location>Cytoskeleton</location>
    </subcellularLocation>
</comment>
<comment type="PTM">
    <text evidence="1">Acetylation of alpha chains at Lys-40 stabilizes microtubules and affects affinity and processivity of microtubule motors. This modification has a role in multiple cellular functions, ranging from cell motility, cell cycle progression or cell differentiation to intracellular trafficking and signaling (By similarity).</text>
</comment>
<comment type="similarity">
    <text evidence="4">Belongs to the tubulin family.</text>
</comment>
<proteinExistence type="evidence at transcript level"/>